<sequence length="1149" mass="125367">MHVMNCVSLASDKENGTLATAAAFMTGQTSPSASPPPPPPPPPPPPCPHSGEGFSPSPPPPLPPPLPGGPPIPPPPPPGLPSVSYLNGYSSLGKKKRMRSFFWKTIPEEQVRGKTNIWTLAAKQQHQYQIDKKTIEELFGQQEDTSKASLPKRGGALNSSFRDAREEVTVLDAKRSMNIGIFLKQFKKSPQSIVEDIYQGKSEHYGSETLREILKLLPESEEVKKLKAFNGDVSKLSLADSFLHCLIQVPNYSLRIEAMVLKKEFLPSCSSLFKDIRTLRAATKELMLCEELHSILHLVLQAGNIMNAGGYAGNAVGFKLSSLLKLADTKANKPGMNLLHFVAQEAQKQDAILLNFSEKLQHVQETSRLSLDITEAELHSLFVRTKSLQENIQLDQELCQQMEDFLQFAVEKLAELELWKRELQGEAHTLIDFFCEDKETMKLDECFQIFRDFCTRFNKAVKDNHDREEQERKQLQRQKEMEQKRYSWSTGELGSFGRSSSENDVQMLAKTGTEDLPSFLKPRPNSPSYRPPNTRRSRLSLGISADRELLTFLESATSSPEDPNKFNSLPRSSPRQARPTIAWMEPREQQSHGPNFTHEPQASKIQEKAPPPAWQNQLPTTWREEPASPLPLAGRSRPSLRKRNSEPVGLGPTQSPPLLPLDLGVREHELVTGLTQFDLQSPKSLEEGSQLTLNDFCPTKLPSPGDRSSQPFAAGGDSLPPKDTDTQEVLSPAGEDDRTISDEPSSEALVSVVVTDTEDKDAGPLLYVSDTTDCSLTLDCSEGMDSRAGGDKQEEEKEGDGSVSSGAGEAGSSQVSSNSVSSPPGEVPAPKSSKSELSCQGGLPKDRPSRGKDAIAPKRNSFKEASVGASKPVSARRSQGVTTKPVRTLNSSENEHMRKVVPISKSSRGAGPWKRPEPTPKATPRETPSSTDTPLSRRSSVRGTSDTSPRRPQVSGSGAEEPRLPRSSGSISGRPGKDAPLQPRASFRKPSAKPLRNIPRQKPEENKVSSPNSPDPESPKEEPKAPQATGVSRALPPIPSFARNTVASSSRSLRTDAPPAARTTGLTRTVSQRQLRVKGGSEDSASKDIGTLKRASSARASKKCPESAGGSSANVETSLKGRGTTERSSLRLKDSGQATLGRILRPLQK</sequence>
<evidence type="ECO:0000250" key="1">
    <source>
        <dbReference type="UniProtKB" id="Q9C0D6"/>
    </source>
</evidence>
<evidence type="ECO:0000255" key="2">
    <source>
        <dbReference type="PROSITE-ProRule" id="PRU00774"/>
    </source>
</evidence>
<evidence type="ECO:0000256" key="3">
    <source>
        <dbReference type="SAM" id="MobiDB-lite"/>
    </source>
</evidence>
<evidence type="ECO:0000269" key="4">
    <source>
    </source>
</evidence>
<evidence type="ECO:0000269" key="5">
    <source>
    </source>
</evidence>
<evidence type="ECO:0000269" key="6">
    <source>
    </source>
</evidence>
<evidence type="ECO:0000303" key="7">
    <source>
    </source>
</evidence>
<evidence type="ECO:0000305" key="8"/>
<evidence type="ECO:0007744" key="9">
    <source>
    </source>
</evidence>
<name>FHDC1_MOUSE</name>
<gene>
    <name type="primary">Fhdc1</name>
    <name evidence="7" type="synonym">Inf1</name>
    <name type="synonym">Kiaa1727</name>
</gene>
<accession>Q3ULZ2</accession>
<accession>B9EHC4</accession>
<accession>Q69ZC2</accession>
<accession>Q8C0A0</accession>
<dbReference type="EMBL" id="AK173244">
    <property type="protein sequence ID" value="BAD32522.1"/>
    <property type="status" value="ALT_INIT"/>
    <property type="molecule type" value="mRNA"/>
</dbReference>
<dbReference type="EMBL" id="AK031946">
    <property type="protein sequence ID" value="BAC27616.1"/>
    <property type="molecule type" value="mRNA"/>
</dbReference>
<dbReference type="EMBL" id="AK145217">
    <property type="protein sequence ID" value="BAE26306.1"/>
    <property type="molecule type" value="mRNA"/>
</dbReference>
<dbReference type="EMBL" id="BC137632">
    <property type="protein sequence ID" value="AAI37633.1"/>
    <property type="molecule type" value="mRNA"/>
</dbReference>
<dbReference type="CCDS" id="CCDS17438.1"/>
<dbReference type="RefSeq" id="NP_001028473.2">
    <property type="nucleotide sequence ID" value="NM_001033301.4"/>
</dbReference>
<dbReference type="RefSeq" id="NP_001192284.1">
    <property type="nucleotide sequence ID" value="NM_001205355.1"/>
</dbReference>
<dbReference type="RefSeq" id="XP_006501391.1">
    <property type="nucleotide sequence ID" value="XM_006501328.5"/>
</dbReference>
<dbReference type="SMR" id="Q3ULZ2"/>
<dbReference type="BioGRID" id="230846">
    <property type="interactions" value="11"/>
</dbReference>
<dbReference type="FunCoup" id="Q3ULZ2">
    <property type="interactions" value="107"/>
</dbReference>
<dbReference type="IntAct" id="Q3ULZ2">
    <property type="interactions" value="1"/>
</dbReference>
<dbReference type="STRING" id="10090.ENSMUSP00000103317"/>
<dbReference type="GlyGen" id="Q3ULZ2">
    <property type="glycosylation" value="1 site"/>
</dbReference>
<dbReference type="iPTMnet" id="Q3ULZ2"/>
<dbReference type="PhosphoSitePlus" id="Q3ULZ2"/>
<dbReference type="PaxDb" id="10090-ENSMUSP00000088525"/>
<dbReference type="ProteomicsDB" id="270986"/>
<dbReference type="Pumba" id="Q3ULZ2"/>
<dbReference type="Antibodypedia" id="16653">
    <property type="antibodies" value="8 antibodies from 7 providers"/>
</dbReference>
<dbReference type="DNASU" id="229474"/>
<dbReference type="Ensembl" id="ENSMUST00000091002.8">
    <property type="protein sequence ID" value="ENSMUSP00000088525.2"/>
    <property type="gene ID" value="ENSMUSG00000041842.16"/>
</dbReference>
<dbReference type="Ensembl" id="ENSMUST00000107689.7">
    <property type="protein sequence ID" value="ENSMUSP00000103317.2"/>
    <property type="gene ID" value="ENSMUSG00000041842.16"/>
</dbReference>
<dbReference type="GeneID" id="229474"/>
<dbReference type="KEGG" id="mmu:229474"/>
<dbReference type="UCSC" id="uc008pqc.3">
    <property type="organism name" value="mouse"/>
</dbReference>
<dbReference type="AGR" id="MGI:2684972"/>
<dbReference type="CTD" id="85462"/>
<dbReference type="MGI" id="MGI:2684972">
    <property type="gene designation" value="Fhdc1"/>
</dbReference>
<dbReference type="VEuPathDB" id="HostDB:ENSMUSG00000041842"/>
<dbReference type="eggNOG" id="KOG1922">
    <property type="taxonomic scope" value="Eukaryota"/>
</dbReference>
<dbReference type="GeneTree" id="ENSGT00940000155128"/>
<dbReference type="HOGENOM" id="CLU_009023_0_0_1"/>
<dbReference type="InParanoid" id="Q3ULZ2"/>
<dbReference type="OMA" id="LECWKQE"/>
<dbReference type="OrthoDB" id="26518at2759"/>
<dbReference type="PhylomeDB" id="Q3ULZ2"/>
<dbReference type="TreeFam" id="TF324020"/>
<dbReference type="BioGRID-ORCS" id="229474">
    <property type="hits" value="5 hits in 76 CRISPR screens"/>
</dbReference>
<dbReference type="ChiTaRS" id="Fhdc1">
    <property type="organism name" value="mouse"/>
</dbReference>
<dbReference type="PRO" id="PR:Q3ULZ2"/>
<dbReference type="Proteomes" id="UP000000589">
    <property type="component" value="Chromosome 3"/>
</dbReference>
<dbReference type="RNAct" id="Q3ULZ2">
    <property type="molecule type" value="protein"/>
</dbReference>
<dbReference type="Bgee" id="ENSMUSG00000041842">
    <property type="expression patterns" value="Expressed in femorotibial joint and 187 other cell types or tissues"/>
</dbReference>
<dbReference type="ExpressionAtlas" id="Q3ULZ2">
    <property type="expression patterns" value="baseline and differential"/>
</dbReference>
<dbReference type="GO" id="GO:0005929">
    <property type="term" value="C:cilium"/>
    <property type="evidence" value="ECO:0000250"/>
    <property type="project" value="UniProtKB"/>
</dbReference>
<dbReference type="GO" id="GO:0005881">
    <property type="term" value="C:cytoplasmic microtubule"/>
    <property type="evidence" value="ECO:0000314"/>
    <property type="project" value="UniProtKB"/>
</dbReference>
<dbReference type="GO" id="GO:0005794">
    <property type="term" value="C:Golgi apparatus"/>
    <property type="evidence" value="ECO:0000314"/>
    <property type="project" value="UniProtKB"/>
</dbReference>
<dbReference type="GO" id="GO:0005874">
    <property type="term" value="C:microtubule"/>
    <property type="evidence" value="ECO:0000314"/>
    <property type="project" value="UniProtKB"/>
</dbReference>
<dbReference type="GO" id="GO:0003779">
    <property type="term" value="F:actin binding"/>
    <property type="evidence" value="ECO:0000314"/>
    <property type="project" value="UniProtKB"/>
</dbReference>
<dbReference type="GO" id="GO:0008017">
    <property type="term" value="F:microtubule binding"/>
    <property type="evidence" value="ECO:0000314"/>
    <property type="project" value="UniProtKB"/>
</dbReference>
<dbReference type="GO" id="GO:0060271">
    <property type="term" value="P:cilium assembly"/>
    <property type="evidence" value="ECO:0000315"/>
    <property type="project" value="UniProtKB"/>
</dbReference>
<dbReference type="GO" id="GO:0090161">
    <property type="term" value="P:Golgi ribbon formation"/>
    <property type="evidence" value="ECO:0000315"/>
    <property type="project" value="UniProtKB"/>
</dbReference>
<dbReference type="GO" id="GO:0043149">
    <property type="term" value="P:stress fiber assembly"/>
    <property type="evidence" value="ECO:0000250"/>
    <property type="project" value="UniProtKB"/>
</dbReference>
<dbReference type="FunFam" id="1.20.58.2220:FF:000014">
    <property type="entry name" value="FH2 domain containing 1"/>
    <property type="match status" value="1"/>
</dbReference>
<dbReference type="Gene3D" id="1.20.58.2220">
    <property type="entry name" value="Formin, FH2 domain"/>
    <property type="match status" value="1"/>
</dbReference>
<dbReference type="InterPro" id="IPR015425">
    <property type="entry name" value="FH2_Formin"/>
</dbReference>
<dbReference type="InterPro" id="IPR042201">
    <property type="entry name" value="FH2_Formin_sf"/>
</dbReference>
<dbReference type="PANTHER" id="PTHR46345:SF11">
    <property type="entry name" value="FORMIN-J-LIKE"/>
    <property type="match status" value="1"/>
</dbReference>
<dbReference type="PANTHER" id="PTHR46345">
    <property type="entry name" value="INVERTED FORMIN-2"/>
    <property type="match status" value="1"/>
</dbReference>
<dbReference type="Pfam" id="PF02181">
    <property type="entry name" value="FH2"/>
    <property type="match status" value="1"/>
</dbReference>
<dbReference type="SMART" id="SM00498">
    <property type="entry name" value="FH2"/>
    <property type="match status" value="1"/>
</dbReference>
<dbReference type="SUPFAM" id="SSF101447">
    <property type="entry name" value="Formin homology 2 domain (FH2 domain)"/>
    <property type="match status" value="1"/>
</dbReference>
<dbReference type="PROSITE" id="PS51444">
    <property type="entry name" value="FH2"/>
    <property type="match status" value="1"/>
</dbReference>
<keyword id="KW-0009">Actin-binding</keyword>
<keyword id="KW-0966">Cell projection</keyword>
<keyword id="KW-0970">Cilium biogenesis/degradation</keyword>
<keyword id="KW-0333">Golgi apparatus</keyword>
<keyword id="KW-0493">Microtubule</keyword>
<keyword id="KW-0597">Phosphoprotein</keyword>
<keyword id="KW-1185">Reference proteome</keyword>
<feature type="chain" id="PRO_0000317281" description="FH2 domain-containing protein 1">
    <location>
        <begin position="1"/>
        <end position="1149"/>
    </location>
</feature>
<feature type="domain" description="FH2" evidence="2">
    <location>
        <begin position="88"/>
        <end position="483"/>
    </location>
</feature>
<feature type="region of interest" description="Disordered" evidence="3">
    <location>
        <begin position="18"/>
        <end position="79"/>
    </location>
</feature>
<feature type="region of interest" description="Disordered" evidence="3">
    <location>
        <begin position="464"/>
        <end position="540"/>
    </location>
</feature>
<feature type="region of interest" description="Disordered" evidence="3">
    <location>
        <begin position="554"/>
        <end position="660"/>
    </location>
</feature>
<feature type="region of interest" description="Disordered" evidence="3">
    <location>
        <begin position="681"/>
        <end position="1149"/>
    </location>
</feature>
<feature type="region of interest" description="MTBD; microtubule-binding domain" evidence="1">
    <location>
        <begin position="960"/>
        <end position="1086"/>
    </location>
</feature>
<feature type="compositionally biased region" description="Pro residues" evidence="3">
    <location>
        <begin position="33"/>
        <end position="48"/>
    </location>
</feature>
<feature type="compositionally biased region" description="Pro residues" evidence="3">
    <location>
        <begin position="56"/>
        <end position="79"/>
    </location>
</feature>
<feature type="compositionally biased region" description="Basic and acidic residues" evidence="3">
    <location>
        <begin position="464"/>
        <end position="485"/>
    </location>
</feature>
<feature type="compositionally biased region" description="Polar residues" evidence="3">
    <location>
        <begin position="486"/>
        <end position="504"/>
    </location>
</feature>
<feature type="compositionally biased region" description="Low complexity" evidence="3">
    <location>
        <begin position="522"/>
        <end position="532"/>
    </location>
</feature>
<feature type="compositionally biased region" description="Polar residues" evidence="3">
    <location>
        <begin position="554"/>
        <end position="575"/>
    </location>
</feature>
<feature type="compositionally biased region" description="Polar residues" evidence="3">
    <location>
        <begin position="591"/>
        <end position="604"/>
    </location>
</feature>
<feature type="compositionally biased region" description="Polar residues" evidence="3">
    <location>
        <begin position="681"/>
        <end position="693"/>
    </location>
</feature>
<feature type="compositionally biased region" description="Basic and acidic residues" evidence="3">
    <location>
        <begin position="784"/>
        <end position="795"/>
    </location>
</feature>
<feature type="compositionally biased region" description="Low complexity" evidence="3">
    <location>
        <begin position="801"/>
        <end position="822"/>
    </location>
</feature>
<feature type="compositionally biased region" description="Basic and acidic residues" evidence="3">
    <location>
        <begin position="844"/>
        <end position="856"/>
    </location>
</feature>
<feature type="compositionally biased region" description="Polar residues" evidence="3">
    <location>
        <begin position="926"/>
        <end position="947"/>
    </location>
</feature>
<feature type="compositionally biased region" description="Low complexity" evidence="3">
    <location>
        <begin position="965"/>
        <end position="974"/>
    </location>
</feature>
<feature type="compositionally biased region" description="Polar residues" evidence="3">
    <location>
        <begin position="1042"/>
        <end position="1052"/>
    </location>
</feature>
<feature type="compositionally biased region" description="Polar residues" evidence="3">
    <location>
        <begin position="1064"/>
        <end position="1074"/>
    </location>
</feature>
<feature type="compositionally biased region" description="Basic and acidic residues" evidence="3">
    <location>
        <begin position="1123"/>
        <end position="1134"/>
    </location>
</feature>
<feature type="modified residue" description="Phosphoserine" evidence="1">
    <location>
        <position position="501"/>
    </location>
</feature>
<feature type="modified residue" description="Phosphoserine" evidence="9">
    <location>
        <position position="645"/>
    </location>
</feature>
<feature type="modified residue" description="Phosphoserine" evidence="9">
    <location>
        <position position="655"/>
    </location>
</feature>
<feature type="sequence conflict" description="In Ref. 2; BAE26306." evidence="8" ref="2">
    <original>S</original>
    <variation>P</variation>
    <location>
        <position position="55"/>
    </location>
</feature>
<feature type="sequence conflict" description="In Ref. 2; BAC27616." evidence="8" ref="2">
    <location>
        <position position="299"/>
    </location>
</feature>
<feature type="sequence conflict" description="In Ref. 2; BAE26306." evidence="8" ref="2">
    <original>S</original>
    <variation>R</variation>
    <location>
        <position position="878"/>
    </location>
</feature>
<organism>
    <name type="scientific">Mus musculus</name>
    <name type="common">Mouse</name>
    <dbReference type="NCBI Taxonomy" id="10090"/>
    <lineage>
        <taxon>Eukaryota</taxon>
        <taxon>Metazoa</taxon>
        <taxon>Chordata</taxon>
        <taxon>Craniata</taxon>
        <taxon>Vertebrata</taxon>
        <taxon>Euteleostomi</taxon>
        <taxon>Mammalia</taxon>
        <taxon>Eutheria</taxon>
        <taxon>Euarchontoglires</taxon>
        <taxon>Glires</taxon>
        <taxon>Rodentia</taxon>
        <taxon>Myomorpha</taxon>
        <taxon>Muroidea</taxon>
        <taxon>Muridae</taxon>
        <taxon>Murinae</taxon>
        <taxon>Mus</taxon>
        <taxon>Mus</taxon>
    </lineage>
</organism>
<proteinExistence type="evidence at protein level"/>
<reference key="1">
    <citation type="journal article" date="2004" name="DNA Res.">
        <title>Prediction of the coding sequences of mouse homologues of KIAA gene: IV. The complete nucleotide sequences of 500 mouse KIAA-homologous cDNAs identified by screening of terminal sequences of cDNA clones randomly sampled from size-fractionated libraries.</title>
        <authorList>
            <person name="Okazaki N."/>
            <person name="Kikuno R."/>
            <person name="Ohara R."/>
            <person name="Inamoto S."/>
            <person name="Koseki H."/>
            <person name="Hiraoka S."/>
            <person name="Saga Y."/>
            <person name="Seino S."/>
            <person name="Nishimura M."/>
            <person name="Kaisho T."/>
            <person name="Hoshino K."/>
            <person name="Kitamura H."/>
            <person name="Nagase T."/>
            <person name="Ohara O."/>
            <person name="Koga H."/>
        </authorList>
    </citation>
    <scope>NUCLEOTIDE SEQUENCE [LARGE SCALE MRNA]</scope>
    <source>
        <tissue>Brain</tissue>
    </source>
</reference>
<reference key="2">
    <citation type="journal article" date="2005" name="Science">
        <title>The transcriptional landscape of the mammalian genome.</title>
        <authorList>
            <person name="Carninci P."/>
            <person name="Kasukawa T."/>
            <person name="Katayama S."/>
            <person name="Gough J."/>
            <person name="Frith M.C."/>
            <person name="Maeda N."/>
            <person name="Oyama R."/>
            <person name="Ravasi T."/>
            <person name="Lenhard B."/>
            <person name="Wells C."/>
            <person name="Kodzius R."/>
            <person name="Shimokawa K."/>
            <person name="Bajic V.B."/>
            <person name="Brenner S.E."/>
            <person name="Batalov S."/>
            <person name="Forrest A.R."/>
            <person name="Zavolan M."/>
            <person name="Davis M.J."/>
            <person name="Wilming L.G."/>
            <person name="Aidinis V."/>
            <person name="Allen J.E."/>
            <person name="Ambesi-Impiombato A."/>
            <person name="Apweiler R."/>
            <person name="Aturaliya R.N."/>
            <person name="Bailey T.L."/>
            <person name="Bansal M."/>
            <person name="Baxter L."/>
            <person name="Beisel K.W."/>
            <person name="Bersano T."/>
            <person name="Bono H."/>
            <person name="Chalk A.M."/>
            <person name="Chiu K.P."/>
            <person name="Choudhary V."/>
            <person name="Christoffels A."/>
            <person name="Clutterbuck D.R."/>
            <person name="Crowe M.L."/>
            <person name="Dalla E."/>
            <person name="Dalrymple B.P."/>
            <person name="de Bono B."/>
            <person name="Della Gatta G."/>
            <person name="di Bernardo D."/>
            <person name="Down T."/>
            <person name="Engstrom P."/>
            <person name="Fagiolini M."/>
            <person name="Faulkner G."/>
            <person name="Fletcher C.F."/>
            <person name="Fukushima T."/>
            <person name="Furuno M."/>
            <person name="Futaki S."/>
            <person name="Gariboldi M."/>
            <person name="Georgii-Hemming P."/>
            <person name="Gingeras T.R."/>
            <person name="Gojobori T."/>
            <person name="Green R.E."/>
            <person name="Gustincich S."/>
            <person name="Harbers M."/>
            <person name="Hayashi Y."/>
            <person name="Hensch T.K."/>
            <person name="Hirokawa N."/>
            <person name="Hill D."/>
            <person name="Huminiecki L."/>
            <person name="Iacono M."/>
            <person name="Ikeo K."/>
            <person name="Iwama A."/>
            <person name="Ishikawa T."/>
            <person name="Jakt M."/>
            <person name="Kanapin A."/>
            <person name="Katoh M."/>
            <person name="Kawasawa Y."/>
            <person name="Kelso J."/>
            <person name="Kitamura H."/>
            <person name="Kitano H."/>
            <person name="Kollias G."/>
            <person name="Krishnan S.P."/>
            <person name="Kruger A."/>
            <person name="Kummerfeld S.K."/>
            <person name="Kurochkin I.V."/>
            <person name="Lareau L.F."/>
            <person name="Lazarevic D."/>
            <person name="Lipovich L."/>
            <person name="Liu J."/>
            <person name="Liuni S."/>
            <person name="McWilliam S."/>
            <person name="Madan Babu M."/>
            <person name="Madera M."/>
            <person name="Marchionni L."/>
            <person name="Matsuda H."/>
            <person name="Matsuzawa S."/>
            <person name="Miki H."/>
            <person name="Mignone F."/>
            <person name="Miyake S."/>
            <person name="Morris K."/>
            <person name="Mottagui-Tabar S."/>
            <person name="Mulder N."/>
            <person name="Nakano N."/>
            <person name="Nakauchi H."/>
            <person name="Ng P."/>
            <person name="Nilsson R."/>
            <person name="Nishiguchi S."/>
            <person name="Nishikawa S."/>
            <person name="Nori F."/>
            <person name="Ohara O."/>
            <person name="Okazaki Y."/>
            <person name="Orlando V."/>
            <person name="Pang K.C."/>
            <person name="Pavan W.J."/>
            <person name="Pavesi G."/>
            <person name="Pesole G."/>
            <person name="Petrovsky N."/>
            <person name="Piazza S."/>
            <person name="Reed J."/>
            <person name="Reid J.F."/>
            <person name="Ring B.Z."/>
            <person name="Ringwald M."/>
            <person name="Rost B."/>
            <person name="Ruan Y."/>
            <person name="Salzberg S.L."/>
            <person name="Sandelin A."/>
            <person name="Schneider C."/>
            <person name="Schoenbach C."/>
            <person name="Sekiguchi K."/>
            <person name="Semple C.A."/>
            <person name="Seno S."/>
            <person name="Sessa L."/>
            <person name="Sheng Y."/>
            <person name="Shibata Y."/>
            <person name="Shimada H."/>
            <person name="Shimada K."/>
            <person name="Silva D."/>
            <person name="Sinclair B."/>
            <person name="Sperling S."/>
            <person name="Stupka E."/>
            <person name="Sugiura K."/>
            <person name="Sultana R."/>
            <person name="Takenaka Y."/>
            <person name="Taki K."/>
            <person name="Tammoja K."/>
            <person name="Tan S.L."/>
            <person name="Tang S."/>
            <person name="Taylor M.S."/>
            <person name="Tegner J."/>
            <person name="Teichmann S.A."/>
            <person name="Ueda H.R."/>
            <person name="van Nimwegen E."/>
            <person name="Verardo R."/>
            <person name="Wei C.L."/>
            <person name="Yagi K."/>
            <person name="Yamanishi H."/>
            <person name="Zabarovsky E."/>
            <person name="Zhu S."/>
            <person name="Zimmer A."/>
            <person name="Hide W."/>
            <person name="Bult C."/>
            <person name="Grimmond S.M."/>
            <person name="Teasdale R.D."/>
            <person name="Liu E.T."/>
            <person name="Brusic V."/>
            <person name="Quackenbush J."/>
            <person name="Wahlestedt C."/>
            <person name="Mattick J.S."/>
            <person name="Hume D.A."/>
            <person name="Kai C."/>
            <person name="Sasaki D."/>
            <person name="Tomaru Y."/>
            <person name="Fukuda S."/>
            <person name="Kanamori-Katayama M."/>
            <person name="Suzuki M."/>
            <person name="Aoki J."/>
            <person name="Arakawa T."/>
            <person name="Iida J."/>
            <person name="Imamura K."/>
            <person name="Itoh M."/>
            <person name="Kato T."/>
            <person name="Kawaji H."/>
            <person name="Kawagashira N."/>
            <person name="Kawashima T."/>
            <person name="Kojima M."/>
            <person name="Kondo S."/>
            <person name="Konno H."/>
            <person name="Nakano K."/>
            <person name="Ninomiya N."/>
            <person name="Nishio T."/>
            <person name="Okada M."/>
            <person name="Plessy C."/>
            <person name="Shibata K."/>
            <person name="Shiraki T."/>
            <person name="Suzuki S."/>
            <person name="Tagami M."/>
            <person name="Waki K."/>
            <person name="Watahiki A."/>
            <person name="Okamura-Oho Y."/>
            <person name="Suzuki H."/>
            <person name="Kawai J."/>
            <person name="Hayashizaki Y."/>
        </authorList>
    </citation>
    <scope>NUCLEOTIDE SEQUENCE [LARGE SCALE MRNA]</scope>
    <source>
        <strain>C57BL/6J</strain>
        <tissue>Mammary gland</tissue>
        <tissue>Medulla oblongata</tissue>
    </source>
</reference>
<reference key="3">
    <citation type="journal article" date="2004" name="Genome Res.">
        <title>The status, quality, and expansion of the NIH full-length cDNA project: the Mammalian Gene Collection (MGC).</title>
        <authorList>
            <consortium name="The MGC Project Team"/>
        </authorList>
    </citation>
    <scope>NUCLEOTIDE SEQUENCE [LARGE SCALE MRNA]</scope>
    <source>
        <tissue>Brain</tissue>
    </source>
</reference>
<reference key="4">
    <citation type="journal article" date="2008" name="Mol. Biol. Cell">
        <title>INF1 is a novel microtubule-associated formin.</title>
        <authorList>
            <person name="Young K.G."/>
            <person name="Thurston S.F."/>
            <person name="Copeland S."/>
            <person name="Smallwood C."/>
            <person name="Copeland J.W."/>
        </authorList>
    </citation>
    <scope>FUNCTION</scope>
    <scope>SUBCELLULAR LOCATION</scope>
    <scope>TISSUE SPECIFICITY</scope>
</reference>
<reference key="5">
    <citation type="journal article" date="2010" name="Cell">
        <title>A tissue-specific atlas of mouse protein phosphorylation and expression.</title>
        <authorList>
            <person name="Huttlin E.L."/>
            <person name="Jedrychowski M.P."/>
            <person name="Elias J.E."/>
            <person name="Goswami T."/>
            <person name="Rad R."/>
            <person name="Beausoleil S.A."/>
            <person name="Villen J."/>
            <person name="Haas W."/>
            <person name="Sowa M.E."/>
            <person name="Gygi S.P."/>
        </authorList>
    </citation>
    <scope>PHOSPHORYLATION [LARGE SCALE ANALYSIS] AT SER-645 AND SER-655</scope>
    <scope>IDENTIFICATION BY MASS SPECTROMETRY [LARGE SCALE ANALYSIS]</scope>
    <source>
        <tissue>Brain</tissue>
        <tissue>Spleen</tissue>
    </source>
</reference>
<reference key="6">
    <citation type="journal article" date="2016" name="Mol. Biol. Cell">
        <title>Actin- and microtubule-dependent regulation of Golgi morphology by FHDC1.</title>
        <authorList>
            <person name="Copeland S.J."/>
            <person name="Thurston S.F."/>
            <person name="Copeland J.W."/>
        </authorList>
    </citation>
    <scope>FUNCTION</scope>
    <scope>SUBCELLULAR LOCATION</scope>
</reference>
<reference key="7">
    <citation type="journal article" date="2018" name="Mol. Biol. Cell">
        <title>Actin-dependent regulation of cilia length by the inverted formin FHDC1.</title>
        <authorList>
            <person name="Copeland S.J."/>
            <person name="McRae A."/>
            <person name="Guarguaglini G."/>
            <person name="Trinkle-Mulcahy L."/>
            <person name="Copeland J.W."/>
        </authorList>
    </citation>
    <scope>FUNCTION</scope>
    <scope>SUBCELLULAR LOCATION</scope>
    <scope>INTERACTION WITH CEP170</scope>
</reference>
<comment type="function">
    <text evidence="4 5 6">Microtubule-associated formin which regulates both actin and microtubule dynamics. Induces microtubule acetylation and stabilization and actin stress fiber formation (PubMed:18815276). Regulates Golgi ribbon formation (PubMed:26564798). Required for normal cilia assembly. Early in cilia assembly, may assist in the maturation and positioning of the centrosome/basal body, and once cilia assembly has initiated, may also promote cilia elongation by inhibiting disassembly (PubMed:29742020).</text>
</comment>
<comment type="subunit">
    <text evidence="6">Interacts with CEP170.</text>
</comment>
<comment type="subcellular location">
    <subcellularLocation>
        <location evidence="5">Golgi apparatus</location>
    </subcellularLocation>
    <subcellularLocation>
        <location evidence="1">Cell projection</location>
        <location evidence="1">Cilium</location>
    </subcellularLocation>
    <text evidence="4 5 6">Associates with microtubules.</text>
</comment>
<comment type="tissue specificity">
    <text evidence="4">Brain, heart and lung (at protein level).</text>
</comment>
<comment type="domain">
    <text evidence="1">The FH2 and MBD domains are essential for its function in regulating Golgi ribbon formation.</text>
</comment>
<comment type="sequence caution" evidence="8">
    <conflict type="erroneous initiation">
        <sequence resource="EMBL-CDS" id="BAD32522"/>
    </conflict>
</comment>
<protein>
    <recommendedName>
        <fullName>FH2 domain-containing protein 1</fullName>
    </recommendedName>
    <alternativeName>
        <fullName evidence="7">Inverted formin-1</fullName>
    </alternativeName>
</protein>